<comment type="function">
    <text evidence="5 7 14 15">Involved in the association of MHC class I with transporter associated with antigen processing (TAP) and in the assembly of MHC class I with peptide (peptide loading).</text>
</comment>
<comment type="subunit">
    <text evidence="7 11 14 16">Heterodimer with PDIA3; disulfide-linked. Obligatory mediator for the interaction between newly assembled MHC class I molecules, calreticulin, PDIA3 and TAP. Up to 4 MHC class I/tapasin complexes bind to 1 TAP (PubMed:19119025, PubMed:21263072, PubMed:26611325). Interacts with HLA-G-B2M complex; this interaction is required for loading of high affinity peptides (PubMed:21263072). On its own or as part of MHC class I peptide loading complex, interacts with ligand-free MR1 or MR1-B2M complex, providing for stable MR1 pools ready for metabolite antigen processing (PubMed:32958637).</text>
</comment>
<comment type="interaction">
    <interactant intactId="EBI-874801">
        <id>O15533</id>
    </interactant>
    <interactant intactId="EBI-2839473">
        <id>P01892</id>
        <label>HLA-A</label>
    </interactant>
    <organismsDiffer>false</organismsDiffer>
    <experiments>10</experiments>
</comment>
<comment type="interaction">
    <interactant intactId="EBI-874801">
        <id>O15533</id>
    </interactant>
    <interactant intactId="EBI-747259">
        <id>Q03518</id>
        <label>TAP1</label>
    </interactant>
    <organismsDiffer>false</organismsDiffer>
    <experiments>13</experiments>
</comment>
<comment type="interaction">
    <interactant intactId="EBI-874801">
        <id>O15533</id>
    </interactant>
    <interactant intactId="EBI-780781">
        <id>Q03519</id>
        <label>TAP2</label>
    </interactant>
    <organismsDiffer>false</organismsDiffer>
    <experiments>8</experiments>
</comment>
<comment type="interaction">
    <interactant intactId="EBI-874801">
        <id>O15533</id>
    </interactant>
    <interactant intactId="EBI-9346744">
        <id>P0C739</id>
        <label>BNLF2a</label>
    </interactant>
    <organismsDiffer>true</organismsDiffer>
    <experiments>6</experiments>
</comment>
<comment type="interaction">
    <interactant intactId="EBI-874801">
        <id>O15533</id>
    </interactant>
    <interactant intactId="EBI-11303846">
        <id>Q77CE4</id>
        <label>gN</label>
    </interactant>
    <organismsDiffer>true</organismsDiffer>
    <experiments>2</experiments>
</comment>
<comment type="subcellular location">
    <subcellularLocation>
        <location evidence="26">Endoplasmic reticulum membrane</location>
        <topology evidence="26">Single-pass type I membrane protein</topology>
    </subcellularLocation>
</comment>
<comment type="alternative products">
    <event type="alternative splicing"/>
    <isoform>
        <id>O15533-1</id>
        <name>1</name>
        <sequence type="displayed"/>
    </isoform>
    <isoform>
        <id>O15533-2</id>
        <name>2</name>
        <sequence type="described" ref="VSP_002577"/>
    </isoform>
    <isoform>
        <id>O15533-3</id>
        <name>3</name>
        <sequence type="described" ref="VSP_017055"/>
    </isoform>
    <isoform>
        <id>O15533-4</id>
        <name>4</name>
        <name>tpsnDeltaEx3</name>
        <sequence type="described" ref="VSP_044455"/>
    </isoform>
</comment>
<comment type="tissue specificity">
    <text>Neutrophils, mostly in fully differentiated cells.</text>
</comment>
<comment type="domain">
    <text evidence="4">The N-terminus is required for efficient association with MHC class I molecule and for a stable interaction between MHC I and calreticulin. Binding to TAP is mediated by the C-terminal region.</text>
</comment>
<comment type="polymorphism">
    <text evidence="20">The 2 alleles of TAPBP; TAPBP*01 (Tapasin*01) (shown here) and TAPBP*02 (Tapasin*02); are in linkage disequilibria with the HLA-DRB1 locus in a Japanese population.</text>
</comment>
<comment type="disease" evidence="6">
    <disease id="DI-06900">
        <name>MHC class I deficiency 3</name>
        <acronym>MHC1D3</acronym>
        <description>An autosomal recessive disorder characterized by glomerulonephritis and markedly reduced cell surface expression of class I HLA antigens. Additional features are herpes zoster infection and polyps of the stomach and colon.</description>
        <dbReference type="MIM" id="620814"/>
    </disease>
    <text>The disease is caused by variants affecting the gene represented in this entry.</text>
</comment>
<comment type="miscellaneous">
    <molecule>Isoform 2</molecule>
    <text evidence="26">Due to a partial intron retention.</text>
</comment>
<comment type="sequence caution" evidence="26">
    <conflict type="miscellaneous discrepancy">
        <sequence resource="EMBL-CDS" id="AAD32924"/>
    </conflict>
    <text>Probable cloning artifact.</text>
</comment>
<comment type="online information" name="TAPBPbase">
    <link uri="https://databases.lovd.nl/shared/genes/TAPBP"/>
    <text>TAPBP mutation db</text>
</comment>
<reference key="1">
    <citation type="journal article" date="1997" name="Proc. Natl. Acad. Sci. U.S.A.">
        <title>Cloning and functional characterization of a subunit of the transporter associated with antigen processing.</title>
        <authorList>
            <person name="Li S."/>
            <person name="Sjoegren H.-O."/>
            <person name="Hellman U."/>
            <person name="Pettersson R.F."/>
            <person name="Wang P."/>
        </authorList>
    </citation>
    <scope>NUCLEOTIDE SEQUENCE [MRNA] (ISOFORM 1)</scope>
    <scope>PARTIAL PROTEIN SEQUENCE</scope>
    <scope>VARIANT ARG-260</scope>
    <source>
        <tissue>Lymphoblast</tissue>
    </source>
</reference>
<reference key="2">
    <citation type="journal article" date="1997" name="Science">
        <title>A critical role for tapasin in the assembly and function of multimeric MHC class I-TAP complexes.</title>
        <authorList>
            <person name="Ortmann B."/>
            <person name="Copeman J."/>
            <person name="Lehner P.J."/>
            <person name="Sadasivan B."/>
            <person name="Herberg J.A."/>
            <person name="Grandea A.G."/>
            <person name="Riddell S.R."/>
            <person name="Tampe R."/>
            <person name="Spies T."/>
            <person name="Trowsdale J."/>
            <person name="Cresswell P."/>
        </authorList>
    </citation>
    <scope>NUCLEOTIDE SEQUENCE [MRNA] (ISOFORM 1)</scope>
    <scope>VARIANT ARG-260</scope>
    <source>
        <tissue>B-cell</tissue>
    </source>
</reference>
<reference key="3">
    <citation type="journal article" date="1998" name="Eur. J. Immunol.">
        <title>Genomic analysis of the Tapasin gene, located close to the TAP loci in the MHC.</title>
        <authorList>
            <person name="Herberg J.A."/>
            <person name="Sgouros J."/>
            <person name="Jones T."/>
            <person name="Copeman J."/>
            <person name="Humphray S.J."/>
            <person name="Sheer D."/>
            <person name="Cresswell P."/>
            <person name="Beck S."/>
            <person name="Trowsdale J."/>
        </authorList>
    </citation>
    <scope>NUCLEOTIDE SEQUENCE [GENOMIC DNA]</scope>
    <scope>VARIANT ARG-260</scope>
</reference>
<reference key="4">
    <citation type="journal article" date="1998" name="J. Mol. Biol.">
        <title>TAPASIN, DAXX, RGL2, HKE2 and four new genes (BING 1, 3 to 5) form a dense cluster at the centromeric end of the MHC.</title>
        <authorList>
            <person name="Herberg J.A."/>
            <person name="Beck S."/>
            <person name="Trowsdale J."/>
        </authorList>
    </citation>
    <scope>NUCLEOTIDE SEQUENCE [GENOMIC DNA]</scope>
</reference>
<reference key="5">
    <citation type="journal article" date="1998" name="Tissue Antigens">
        <title>Polymorphism of TAPASIN and its linkage disequilibria with HLA class II genes in the Japanese population.</title>
        <authorList>
            <person name="Furukawa H."/>
            <person name="Kashiwase K."/>
            <person name="Yabe T."/>
            <person name="Ishikawa Y."/>
            <person name="Akaza T."/>
            <person name="Tadokoro K."/>
            <person name="Tohma S."/>
            <person name="Inoue T."/>
            <person name="Tokunaga K."/>
            <person name="Yamamoto K."/>
            <person name="Juji T."/>
        </authorList>
    </citation>
    <scope>NUCLEOTIDE SEQUENCE [GENOMIC DNA / MRNA] (ISOFORM 1)</scope>
    <scope>POLYMORPHISM</scope>
    <scope>VARIANT ARG-260</scope>
    <source>
        <tissue>Lymphocyte</tissue>
    </source>
</reference>
<reference key="6">
    <citation type="journal article" date="1999" name="J. Leukoc. Biol.">
        <title>Granulocyte-macrophage colony-stimulating factor modulates tapasin expression in human neutrophils.</title>
        <authorList>
            <person name="El Ouakfaoui S."/>
            <person name="Heitz D."/>
            <person name="Paquin R."/>
            <person name="Beaulieu A.D."/>
        </authorList>
    </citation>
    <scope>NUCLEOTIDE SEQUENCE [MRNA] (ISOFORM 1)</scope>
    <scope>VARIANT ARG-260</scope>
    <source>
        <tissue>Neutrophil</tissue>
    </source>
</reference>
<reference key="7">
    <citation type="journal article" date="2004" name="Genes Immun.">
        <title>Generation of a functional, soluble tapasin protein from an alternatively spliced mRNA.</title>
        <authorList>
            <person name="Gao B."/>
            <person name="Williams A."/>
            <person name="Sewell A."/>
            <person name="Elliott T."/>
        </authorList>
    </citation>
    <scope>NUCLEOTIDE SEQUENCE [MRNA] (ISOFORM 2)</scope>
    <scope>VARIANT ARG-260</scope>
    <source>
        <tissue>B-cell</tissue>
    </source>
</reference>
<reference key="8">
    <citation type="journal article" date="2010" name="Hum. Immunol.">
        <title>Identification of an alternate splice form of tapasin in human melanoma.</title>
        <authorList>
            <person name="Belicha-Villanueva A."/>
            <person name="Golding M."/>
            <person name="McEvoy S."/>
            <person name="Sarvaiya N."/>
            <person name="Cresswell P."/>
            <person name="Gollnick S.O."/>
            <person name="Bangia N."/>
        </authorList>
    </citation>
    <scope>NUCLEOTIDE SEQUENCE [MRNA] (ISOFORM 4)</scope>
    <scope>ALTERNATIVE SPLICING</scope>
    <scope>VARIANT ARG-260</scope>
    <source>
        <tissue>Melanoma</tissue>
    </source>
</reference>
<reference key="9">
    <citation type="journal article" date="2003" name="Nature">
        <title>The DNA sequence and analysis of human chromosome 6.</title>
        <authorList>
            <person name="Mungall A.J."/>
            <person name="Palmer S.A."/>
            <person name="Sims S.K."/>
            <person name="Edwards C.A."/>
            <person name="Ashurst J.L."/>
            <person name="Wilming L."/>
            <person name="Jones M.C."/>
            <person name="Horton R."/>
            <person name="Hunt S.E."/>
            <person name="Scott C.E."/>
            <person name="Gilbert J.G.R."/>
            <person name="Clamp M.E."/>
            <person name="Bethel G."/>
            <person name="Milne S."/>
            <person name="Ainscough R."/>
            <person name="Almeida J.P."/>
            <person name="Ambrose K.D."/>
            <person name="Andrews T.D."/>
            <person name="Ashwell R.I.S."/>
            <person name="Babbage A.K."/>
            <person name="Bagguley C.L."/>
            <person name="Bailey J."/>
            <person name="Banerjee R."/>
            <person name="Barker D.J."/>
            <person name="Barlow K.F."/>
            <person name="Bates K."/>
            <person name="Beare D.M."/>
            <person name="Beasley H."/>
            <person name="Beasley O."/>
            <person name="Bird C.P."/>
            <person name="Blakey S.E."/>
            <person name="Bray-Allen S."/>
            <person name="Brook J."/>
            <person name="Brown A.J."/>
            <person name="Brown J.Y."/>
            <person name="Burford D.C."/>
            <person name="Burrill W."/>
            <person name="Burton J."/>
            <person name="Carder C."/>
            <person name="Carter N.P."/>
            <person name="Chapman J.C."/>
            <person name="Clark S.Y."/>
            <person name="Clark G."/>
            <person name="Clee C.M."/>
            <person name="Clegg S."/>
            <person name="Cobley V."/>
            <person name="Collier R.E."/>
            <person name="Collins J.E."/>
            <person name="Colman L.K."/>
            <person name="Corby N.R."/>
            <person name="Coville G.J."/>
            <person name="Culley K.M."/>
            <person name="Dhami P."/>
            <person name="Davies J."/>
            <person name="Dunn M."/>
            <person name="Earthrowl M.E."/>
            <person name="Ellington A.E."/>
            <person name="Evans K.A."/>
            <person name="Faulkner L."/>
            <person name="Francis M.D."/>
            <person name="Frankish A."/>
            <person name="Frankland J."/>
            <person name="French L."/>
            <person name="Garner P."/>
            <person name="Garnett J."/>
            <person name="Ghori M.J."/>
            <person name="Gilby L.M."/>
            <person name="Gillson C.J."/>
            <person name="Glithero R.J."/>
            <person name="Grafham D.V."/>
            <person name="Grant M."/>
            <person name="Gribble S."/>
            <person name="Griffiths C."/>
            <person name="Griffiths M.N.D."/>
            <person name="Hall R."/>
            <person name="Halls K.S."/>
            <person name="Hammond S."/>
            <person name="Harley J.L."/>
            <person name="Hart E.A."/>
            <person name="Heath P.D."/>
            <person name="Heathcott R."/>
            <person name="Holmes S.J."/>
            <person name="Howden P.J."/>
            <person name="Howe K.L."/>
            <person name="Howell G.R."/>
            <person name="Huckle E."/>
            <person name="Humphray S.J."/>
            <person name="Humphries M.D."/>
            <person name="Hunt A.R."/>
            <person name="Johnson C.M."/>
            <person name="Joy A.A."/>
            <person name="Kay M."/>
            <person name="Keenan S.J."/>
            <person name="Kimberley A.M."/>
            <person name="King A."/>
            <person name="Laird G.K."/>
            <person name="Langford C."/>
            <person name="Lawlor S."/>
            <person name="Leongamornlert D.A."/>
            <person name="Leversha M."/>
            <person name="Lloyd C.R."/>
            <person name="Lloyd D.M."/>
            <person name="Loveland J.E."/>
            <person name="Lovell J."/>
            <person name="Martin S."/>
            <person name="Mashreghi-Mohammadi M."/>
            <person name="Maslen G.L."/>
            <person name="Matthews L."/>
            <person name="McCann O.T."/>
            <person name="McLaren S.J."/>
            <person name="McLay K."/>
            <person name="McMurray A."/>
            <person name="Moore M.J.F."/>
            <person name="Mullikin J.C."/>
            <person name="Niblett D."/>
            <person name="Nickerson T."/>
            <person name="Novik K.L."/>
            <person name="Oliver K."/>
            <person name="Overton-Larty E.K."/>
            <person name="Parker A."/>
            <person name="Patel R."/>
            <person name="Pearce A.V."/>
            <person name="Peck A.I."/>
            <person name="Phillimore B.J.C.T."/>
            <person name="Phillips S."/>
            <person name="Plumb R.W."/>
            <person name="Porter K.M."/>
            <person name="Ramsey Y."/>
            <person name="Ranby S.A."/>
            <person name="Rice C.M."/>
            <person name="Ross M.T."/>
            <person name="Searle S.M."/>
            <person name="Sehra H.K."/>
            <person name="Sheridan E."/>
            <person name="Skuce C.D."/>
            <person name="Smith S."/>
            <person name="Smith M."/>
            <person name="Spraggon L."/>
            <person name="Squares S.L."/>
            <person name="Steward C.A."/>
            <person name="Sycamore N."/>
            <person name="Tamlyn-Hall G."/>
            <person name="Tester J."/>
            <person name="Theaker A.J."/>
            <person name="Thomas D.W."/>
            <person name="Thorpe A."/>
            <person name="Tracey A."/>
            <person name="Tromans A."/>
            <person name="Tubby B."/>
            <person name="Wall M."/>
            <person name="Wallis J.M."/>
            <person name="West A.P."/>
            <person name="White S.S."/>
            <person name="Whitehead S.L."/>
            <person name="Whittaker H."/>
            <person name="Wild A."/>
            <person name="Willey D.J."/>
            <person name="Wilmer T.E."/>
            <person name="Wood J.M."/>
            <person name="Wray P.W."/>
            <person name="Wyatt J.C."/>
            <person name="Young L."/>
            <person name="Younger R.M."/>
            <person name="Bentley D.R."/>
            <person name="Coulson A."/>
            <person name="Durbin R.M."/>
            <person name="Hubbard T."/>
            <person name="Sulston J.E."/>
            <person name="Dunham I."/>
            <person name="Rogers J."/>
            <person name="Beck S."/>
        </authorList>
    </citation>
    <scope>NUCLEOTIDE SEQUENCE [LARGE SCALE GENOMIC DNA]</scope>
    <scope>VARIANT ARG-260</scope>
</reference>
<reference key="10">
    <citation type="submission" date="2005-07" db="EMBL/GenBank/DDBJ databases">
        <authorList>
            <person name="Mural R.J."/>
            <person name="Istrail S."/>
            <person name="Sutton G.G."/>
            <person name="Florea L."/>
            <person name="Halpern A.L."/>
            <person name="Mobarry C.M."/>
            <person name="Lippert R."/>
            <person name="Walenz B."/>
            <person name="Shatkay H."/>
            <person name="Dew I."/>
            <person name="Miller J.R."/>
            <person name="Flanigan M.J."/>
            <person name="Edwards N.J."/>
            <person name="Bolanos R."/>
            <person name="Fasulo D."/>
            <person name="Halldorsson B.V."/>
            <person name="Hannenhalli S."/>
            <person name="Turner R."/>
            <person name="Yooseph S."/>
            <person name="Lu F."/>
            <person name="Nusskern D.R."/>
            <person name="Shue B.C."/>
            <person name="Zheng X.H."/>
            <person name="Zhong F."/>
            <person name="Delcher A.L."/>
            <person name="Huson D.H."/>
            <person name="Kravitz S.A."/>
            <person name="Mouchard L."/>
            <person name="Reinert K."/>
            <person name="Remington K.A."/>
            <person name="Clark A.G."/>
            <person name="Waterman M.S."/>
            <person name="Eichler E.E."/>
            <person name="Adams M.D."/>
            <person name="Hunkapiller M.W."/>
            <person name="Myers E.W."/>
            <person name="Venter J.C."/>
        </authorList>
    </citation>
    <scope>NUCLEOTIDE SEQUENCE [LARGE SCALE GENOMIC DNA]</scope>
    <scope>VARIANT ARG-260</scope>
</reference>
<reference key="11">
    <citation type="journal article" date="2004" name="Genome Res.">
        <title>The status, quality, and expansion of the NIH full-length cDNA project: the Mammalian Gene Collection (MGC).</title>
        <authorList>
            <consortium name="The MGC Project Team"/>
        </authorList>
    </citation>
    <scope>NUCLEOTIDE SEQUENCE [LARGE SCALE MRNA] (ISOFORM 3)</scope>
    <scope>VARIANT ARG-260</scope>
    <source>
        <tissue>Prostate</tissue>
    </source>
</reference>
<reference key="12">
    <citation type="journal article" date="1999" name="Eur. J. Immunol.">
        <title>The N-terminal region of tapasin is required to stabilize the MHC class I loading complex.</title>
        <authorList>
            <person name="Bangia N."/>
            <person name="Lehner P.J."/>
            <person name="Hughes E.A."/>
            <person name="Surman M."/>
            <person name="Cresswell P."/>
        </authorList>
    </citation>
    <scope>MUTAGENESIS</scope>
    <scope>DOMAIN CHARACTERIZATION</scope>
</reference>
<reference key="13">
    <citation type="journal article" date="2000" name="J. Biol. Chem.">
        <title>Tapasin is required for efficient peptide binding to transporter associated with antigen processing.</title>
        <authorList>
            <person name="Li S."/>
            <person name="Paulsson K.M."/>
            <person name="Chen S."/>
            <person name="Sjoegren H.-O."/>
            <person name="Wang P."/>
        </authorList>
    </citation>
    <scope>FUNCTION</scope>
</reference>
<reference key="14">
    <citation type="journal article" date="2003" name="J. Biol. Chem.">
        <title>An essential function of tapasin in quality control of HLA-G molecules.</title>
        <authorList>
            <person name="Park B."/>
            <person name="Ahn K."/>
        </authorList>
    </citation>
    <scope>FUNCTION</scope>
</reference>
<reference key="15">
    <citation type="journal article" date="2009" name="J. Proteome Res.">
        <title>Glycoproteomics analysis of human liver tissue by combination of multiple enzyme digestion and hydrazide chemistry.</title>
        <authorList>
            <person name="Chen R."/>
            <person name="Jiang X."/>
            <person name="Sun D."/>
            <person name="Han G."/>
            <person name="Wang F."/>
            <person name="Ye M."/>
            <person name="Wang L."/>
            <person name="Zou H."/>
        </authorList>
    </citation>
    <scope>GLYCOSYLATION [LARGE SCALE ANALYSIS] AT ASN-253</scope>
    <source>
        <tissue>Liver</tissue>
    </source>
</reference>
<reference key="16">
    <citation type="journal article" date="2011" name="BMC Syst. Biol.">
        <title>Initial characterization of the human central proteome.</title>
        <authorList>
            <person name="Burkard T.R."/>
            <person name="Planyavsky M."/>
            <person name="Kaupe I."/>
            <person name="Breitwieser F.P."/>
            <person name="Buerckstuemmer T."/>
            <person name="Bennett K.L."/>
            <person name="Superti-Furga G."/>
            <person name="Colinge J."/>
        </authorList>
    </citation>
    <scope>IDENTIFICATION BY MASS SPECTROMETRY [LARGE SCALE ANALYSIS]</scope>
</reference>
<reference key="17">
    <citation type="journal article" date="2011" name="J. Immunol.">
        <title>Distinct functions for the glycans of tapasin and heavy chains in the assembly of MHC class I molecules.</title>
        <authorList>
            <person name="Rizvi S.M."/>
            <person name="Del Cid N."/>
            <person name="Lybarger L."/>
            <person name="Raghavan M."/>
        </authorList>
    </citation>
    <scope>FUNCTION</scope>
    <scope>INTERACTION WITH HLA-A*02-B2M</scope>
    <scope>MUTAGENESIS OF CYS-115 AND ASN-253</scope>
</reference>
<reference key="18">
    <citation type="journal article" date="2012" name="Cell. Mol. Life Sci.">
        <title>Direct evidence that the N-terminal extensions of the TAP complex act as autonomous interaction scaffolds for the assembly of the MHC I peptide-loading complex.</title>
        <authorList>
            <person name="Hulpke S."/>
            <person name="Tomioka M."/>
            <person name="Kremmer E."/>
            <person name="Ueda K."/>
            <person name="Abele R."/>
            <person name="Tampe R."/>
        </authorList>
    </citation>
    <scope>INTERACTION WITH TAP1-TAP2</scope>
</reference>
<reference key="19">
    <citation type="journal article" date="2015" name="Proteomics">
        <title>N-terminome analysis of the human mitochondrial proteome.</title>
        <authorList>
            <person name="Vaca Jacome A.S."/>
            <person name="Rabilloud T."/>
            <person name="Schaeffer-Reiss C."/>
            <person name="Rompais M."/>
            <person name="Ayoub D."/>
            <person name="Lane L."/>
            <person name="Bairoch A."/>
            <person name="Van Dorsselaer A."/>
            <person name="Carapito C."/>
        </authorList>
    </citation>
    <scope>CLEAVAGE OF SIGNAL PEPTIDE [LARGE SCALE ANALYSIS] AFTER ALA-20</scope>
    <scope>IDENTIFICATION BY MASS SPECTROMETRY [LARGE SCALE ANALYSIS]</scope>
</reference>
<reference key="20">
    <citation type="journal article" date="2015" name="Sci. Rep.">
        <title>Assembly of the MHC I peptide-loading complex determined by a conserved ionic lock-switch.</title>
        <authorList>
            <person name="Blees A."/>
            <person name="Reichel K."/>
            <person name="Trowitzsch S."/>
            <person name="Fisette O."/>
            <person name="Bock C."/>
            <person name="Abele R."/>
            <person name="Hummer G."/>
            <person name="Schaefer L.V."/>
            <person name="Tampe R."/>
        </authorList>
    </citation>
    <scope>FUNCTION</scope>
    <scope>SUBUNIT</scope>
    <scope>INTERACTION WITH TAP1-TAP2</scope>
    <scope>SITE</scope>
    <scope>MUTAGENESIS OF LYS-428</scope>
</reference>
<reference key="21">
    <citation type="journal article" date="2020" name="Proc. Natl. Acad. Sci. U.S.A.">
        <title>Endoplasmic reticulum chaperones stabilize ligand-receptive MR1 molecules for efficient presentation of metabolite antigens.</title>
        <authorList>
            <person name="McWilliam H.E.G."/>
            <person name="Mak J.Y.W."/>
            <person name="Awad W."/>
            <person name="Zorkau M."/>
            <person name="Cruz-Gomez S."/>
            <person name="Lim H.J."/>
            <person name="Yan Y."/>
            <person name="Wormald S."/>
            <person name="Dagley L.F."/>
            <person name="Eckle S.B.G."/>
            <person name="Corbett A.J."/>
            <person name="Liu H."/>
            <person name="Li S."/>
            <person name="Reddiex S.J.J."/>
            <person name="Mintern J.D."/>
            <person name="Liu L."/>
            <person name="McCluskey J."/>
            <person name="Rossjohn J."/>
            <person name="Fairlie D.P."/>
            <person name="Villadangos J.A."/>
        </authorList>
    </citation>
    <scope>INTERACTION WITH MR1</scope>
    <scope>MUTAGENESIS OF GLU-205; ARG-207; GLN-209; LEU-270 AND GLN-281</scope>
</reference>
<reference key="22">
    <citation type="journal article" date="2009" name="Immunity">
        <title>Insights into MHC class I peptide loading from the structure of the tapasin-ERp57 thiol oxidoreductase heterodimer.</title>
        <authorList>
            <person name="Dong G."/>
            <person name="Wearsch P.A."/>
            <person name="Peaper D.R."/>
            <person name="Cresswell P."/>
            <person name="Reinisch K.M."/>
        </authorList>
    </citation>
    <scope>X-RAY CRYSTALLOGRAPHY (2.6 ANGSTROMS) OF 1-401 IN COMPLEX WITH PDIA3</scope>
    <scope>SUBUNIT</scope>
    <scope>INTERACTION WITH PDIA3</scope>
    <scope>GLYCOSYLATION AT ASN-253</scope>
    <scope>DISULFIDE BONDS</scope>
</reference>
<reference key="23">
    <citation type="journal article" date="2002" name="Blood">
        <title>A subject with a novel type I bare lymphocyte syndrome has tapasin deficiency due to deletion of 4 exons by Alu-mediated recombination.</title>
        <authorList>
            <person name="Yabe T."/>
            <person name="Kawamura S."/>
            <person name="Sato M."/>
            <person name="Kashiwase K."/>
            <person name="Tanaka H."/>
            <person name="Ishikawa Y."/>
            <person name="Asao Y."/>
            <person name="Oyama J."/>
            <person name="Tsuruta K."/>
            <person name="Tokunaga K."/>
            <person name="Tadokoro K."/>
            <person name="Juji T."/>
        </authorList>
    </citation>
    <scope>INVOLVEMENT IN MHC1D3</scope>
</reference>
<protein>
    <recommendedName>
        <fullName evidence="22">Tapasin</fullName>
        <shortName>TPN</shortName>
        <shortName>TPSN</shortName>
    </recommendedName>
    <alternativeName>
        <fullName>NGS-17</fullName>
    </alternativeName>
    <alternativeName>
        <fullName>TAP-associated protein</fullName>
    </alternativeName>
    <alternativeName>
        <fullName>TAP-binding protein</fullName>
    </alternativeName>
</protein>
<proteinExistence type="evidence at protein level"/>
<keyword id="KW-0002">3D-structure</keyword>
<keyword id="KW-0025">Alternative splicing</keyword>
<keyword id="KW-0903">Direct protein sequencing</keyword>
<keyword id="KW-1015">Disulfide bond</keyword>
<keyword id="KW-0256">Endoplasmic reticulum</keyword>
<keyword id="KW-0325">Glycoprotein</keyword>
<keyword id="KW-0393">Immunoglobulin domain</keyword>
<keyword id="KW-0472">Membrane</keyword>
<keyword id="KW-1267">Proteomics identification</keyword>
<keyword id="KW-1185">Reference proteome</keyword>
<keyword id="KW-0732">Signal</keyword>
<keyword id="KW-0812">Transmembrane</keyword>
<keyword id="KW-1133">Transmembrane helix</keyword>
<organism>
    <name type="scientific">Homo sapiens</name>
    <name type="common">Human</name>
    <dbReference type="NCBI Taxonomy" id="9606"/>
    <lineage>
        <taxon>Eukaryota</taxon>
        <taxon>Metazoa</taxon>
        <taxon>Chordata</taxon>
        <taxon>Craniata</taxon>
        <taxon>Vertebrata</taxon>
        <taxon>Euteleostomi</taxon>
        <taxon>Mammalia</taxon>
        <taxon>Eutheria</taxon>
        <taxon>Euarchontoglires</taxon>
        <taxon>Primates</taxon>
        <taxon>Haplorrhini</taxon>
        <taxon>Catarrhini</taxon>
        <taxon>Hominidae</taxon>
        <taxon>Homo</taxon>
    </lineage>
</organism>
<gene>
    <name evidence="27" type="primary">TAPBP</name>
    <name type="synonym">NGS17</name>
    <name type="synonym">TAPA</name>
</gene>
<feature type="signal peptide" evidence="28">
    <location>
        <begin position="1"/>
        <end position="20"/>
    </location>
</feature>
<feature type="chain" id="PRO_0000014990" description="Tapasin">
    <location>
        <begin position="21"/>
        <end position="448"/>
    </location>
</feature>
<feature type="topological domain" description="Lumenal" evidence="1">
    <location>
        <begin position="21"/>
        <end position="414"/>
    </location>
</feature>
<feature type="transmembrane region" description="Helical" evidence="1">
    <location>
        <begin position="415"/>
        <end position="435"/>
    </location>
</feature>
<feature type="topological domain" description="Cytoplasmic" evidence="1">
    <location>
        <begin position="436"/>
        <end position="448"/>
    </location>
</feature>
<feature type="domain" description="Ig-like C1-type">
    <location>
        <begin position="292"/>
        <end position="399"/>
    </location>
</feature>
<feature type="site" description="Inter-subunit salt bridge with TAP1-TAP2. Essential peptide loading complex assembly" evidence="15">
    <location>
        <position position="428"/>
    </location>
</feature>
<feature type="site" description="May be involved in interaction with TAP">
    <location>
        <position position="428"/>
    </location>
</feature>
<feature type="glycosylation site" description="N-linked (GlcNAc...) asparagine" evidence="11 12">
    <location>
        <position position="253"/>
    </location>
</feature>
<feature type="disulfide bond" evidence="2 11">
    <location>
        <begin position="27"/>
        <end position="91"/>
    </location>
</feature>
<feature type="disulfide bond" description="Interchain (with C-57 in PDIA3)" evidence="2 11">
    <location>
        <position position="115"/>
    </location>
</feature>
<feature type="disulfide bond" evidence="2 11">
    <location>
        <begin position="315"/>
        <end position="382"/>
    </location>
</feature>
<feature type="splice variant" id="VSP_044455" description="In isoform 4." evidence="25">
    <location>
        <begin position="70"/>
        <end position="156"/>
    </location>
</feature>
<feature type="splice variant" id="VSP_002577" description="In isoform 2." evidence="23">
    <original>LSGPSLEDSVGLFLSAFLLLGLFKALGWAAVYLSTCKDSKKKAE</original>
    <variation>KSWELCGI</variation>
    <location>
        <begin position="405"/>
        <end position="448"/>
    </location>
</feature>
<feature type="splice variant" id="VSP_017055" description="In isoform 3." evidence="24">
    <original>KAE</original>
    <variation>VQCSTSLYLSLVTLSPHPISKPMEGGCWCGRQNLGLEFTLIWVKTWHYILTVGLFEHAT</variation>
    <location>
        <begin position="446"/>
        <end position="448"/>
    </location>
</feature>
<feature type="sequence variant" id="VAR_010253" description="In allele TAPBP*01; dbSNP:rs2071888." evidence="3 8 9 10 13 17 18 19 20 21">
    <original>T</original>
    <variation>R</variation>
    <location>
        <position position="260"/>
    </location>
</feature>
<feature type="mutagenesis site" description="Abolishes the recruitment of PDIA3, CALR and B2M to the peptide-loading complex." evidence="14">
    <original>C</original>
    <variation>A</variation>
    <location>
        <position position="115"/>
    </location>
</feature>
<feature type="mutagenesis site" description="Decreases cell surface expression of MR1-metabolite antigen complex; when associated with E-207, S-209 and S-281." evidence="16">
    <original>E</original>
    <variation>K</variation>
    <location>
        <position position="205"/>
    </location>
</feature>
<feature type="mutagenesis site" description="Decreases cell surface expression of MR1-metabolite antigen complex; when associated with E-205, S-209 and S-281." evidence="16">
    <original>R</original>
    <variation>E</variation>
    <location>
        <position position="207"/>
    </location>
</feature>
<feature type="mutagenesis site" description="Decreases cell surface expression of MR1-metabolite antigen complex; when associated with E-205, S-207 and S-281." evidence="16">
    <original>Q</original>
    <variation>S</variation>
    <location>
        <position position="209"/>
    </location>
</feature>
<feature type="mutagenesis site" description="Reduces the recruitment of PDIA3 to TAP1-TAP2 transporter." evidence="14">
    <original>N</original>
    <variation>Q</variation>
    <location>
        <position position="253"/>
    </location>
</feature>
<feature type="mutagenesis site" description="Decreases cell surface expression of MR1-metabolite antigen complex." evidence="16">
    <original>L</original>
    <variation>K</variation>
    <location>
        <position position="270"/>
    </location>
</feature>
<feature type="mutagenesis site" description="Decreases cell surface expression of MR1-metabolite antigen complex; when associated with E-205, S-207 and S-209." evidence="16">
    <original>Q</original>
    <variation>S</variation>
    <location>
        <position position="281"/>
    </location>
</feature>
<feature type="mutagenesis site" description="Restores interaction with TAP1-TAP2; when associated with TAP1 K-92 or TAP2 K-16." evidence="15">
    <original>K</original>
    <variation>D</variation>
    <location>
        <position position="428"/>
    </location>
</feature>
<feature type="sequence conflict" description="In Ref. 11; AAH80574." evidence="26" ref="11">
    <original>H</original>
    <variation>Y</variation>
    <location>
        <position position="274"/>
    </location>
</feature>
<feature type="sequence conflict" description="In Ref. 8; ACD68200." evidence="26" ref="8">
    <original>L</original>
    <variation>P</variation>
    <location>
        <position position="296"/>
    </location>
</feature>
<feature type="sequence conflict" description="In Ref. 7; AAD32924." evidence="26" ref="7">
    <original>D</original>
    <variation>N</variation>
    <location>
        <position position="412"/>
    </location>
</feature>
<feature type="strand" evidence="29">
    <location>
        <begin position="23"/>
        <end position="29"/>
    </location>
</feature>
<feature type="turn" evidence="30">
    <location>
        <begin position="34"/>
        <end position="36"/>
    </location>
</feature>
<feature type="strand" evidence="29">
    <location>
        <begin position="41"/>
        <end position="46"/>
    </location>
</feature>
<feature type="strand" evidence="30">
    <location>
        <begin position="50"/>
        <end position="52"/>
    </location>
</feature>
<feature type="strand" evidence="31">
    <location>
        <begin position="58"/>
        <end position="60"/>
    </location>
</feature>
<feature type="helix" evidence="30">
    <location>
        <begin position="62"/>
        <end position="64"/>
    </location>
</feature>
<feature type="strand" evidence="29">
    <location>
        <begin position="65"/>
        <end position="69"/>
    </location>
</feature>
<feature type="helix" evidence="29">
    <location>
        <begin position="74"/>
        <end position="81"/>
    </location>
</feature>
<feature type="strand" evidence="29">
    <location>
        <begin position="90"/>
        <end position="96"/>
    </location>
</feature>
<feature type="helix" evidence="29">
    <location>
        <begin position="104"/>
        <end position="109"/>
    </location>
</feature>
<feature type="strand" evidence="29">
    <location>
        <begin position="112"/>
        <end position="116"/>
    </location>
</feature>
<feature type="helix" evidence="29">
    <location>
        <begin position="117"/>
        <end position="119"/>
    </location>
</feature>
<feature type="strand" evidence="29">
    <location>
        <begin position="123"/>
        <end position="129"/>
    </location>
</feature>
<feature type="strand" evidence="29">
    <location>
        <begin position="134"/>
        <end position="141"/>
    </location>
</feature>
<feature type="strand" evidence="29">
    <location>
        <begin position="148"/>
        <end position="150"/>
    </location>
</feature>
<feature type="strand" evidence="29">
    <location>
        <begin position="153"/>
        <end position="164"/>
    </location>
</feature>
<feature type="strand" evidence="29">
    <location>
        <begin position="169"/>
        <end position="171"/>
    </location>
</feature>
<feature type="strand" evidence="29">
    <location>
        <begin position="176"/>
        <end position="178"/>
    </location>
</feature>
<feature type="strand" evidence="29">
    <location>
        <begin position="181"/>
        <end position="184"/>
    </location>
</feature>
<feature type="helix" evidence="31">
    <location>
        <begin position="188"/>
        <end position="191"/>
    </location>
</feature>
<feature type="strand" evidence="29">
    <location>
        <begin position="203"/>
        <end position="210"/>
    </location>
</feature>
<feature type="strand" evidence="29">
    <location>
        <begin position="213"/>
        <end position="220"/>
    </location>
</feature>
<feature type="strand" evidence="29">
    <location>
        <begin position="236"/>
        <end position="242"/>
    </location>
</feature>
<feature type="strand" evidence="31">
    <location>
        <begin position="246"/>
        <end position="248"/>
    </location>
</feature>
<feature type="strand" evidence="29">
    <location>
        <begin position="250"/>
        <end position="258"/>
    </location>
</feature>
<feature type="helix" evidence="29">
    <location>
        <begin position="263"/>
        <end position="265"/>
    </location>
</feature>
<feature type="strand" evidence="29">
    <location>
        <begin position="267"/>
        <end position="275"/>
    </location>
</feature>
<feature type="strand" evidence="29">
    <location>
        <begin position="278"/>
        <end position="290"/>
    </location>
</feature>
<feature type="strand" evidence="29">
    <location>
        <begin position="293"/>
        <end position="300"/>
    </location>
</feature>
<feature type="strand" evidence="31">
    <location>
        <begin position="302"/>
        <end position="304"/>
    </location>
</feature>
<feature type="turn" evidence="31">
    <location>
        <begin position="306"/>
        <end position="308"/>
    </location>
</feature>
<feature type="strand" evidence="29">
    <location>
        <begin position="313"/>
        <end position="323"/>
    </location>
</feature>
<feature type="strand" evidence="29">
    <location>
        <begin position="327"/>
        <end position="337"/>
    </location>
</feature>
<feature type="strand" evidence="29">
    <location>
        <begin position="345"/>
        <end position="349"/>
    </location>
</feature>
<feature type="strand" evidence="29">
    <location>
        <begin position="360"/>
        <end position="367"/>
    </location>
</feature>
<feature type="helix" evidence="29">
    <location>
        <begin position="373"/>
        <end position="375"/>
    </location>
</feature>
<feature type="strand" evidence="29">
    <location>
        <begin position="379"/>
        <end position="385"/>
    </location>
</feature>
<feature type="strand" evidence="29">
    <location>
        <begin position="394"/>
        <end position="399"/>
    </location>
</feature>
<accession>O15533</accession>
<accession>A2AB91</accession>
<accession>A2ABC0</accession>
<accession>B0V003</accession>
<accession>B0V0A6</accession>
<accession>B2ZUA4</accession>
<accession>E9PGM2</accession>
<accession>O15210</accession>
<accession>O15272</accession>
<accession>Q5STJ8</accession>
<accession>Q5STK6</accession>
<accession>Q5STQ5</accession>
<accession>Q5STQ6</accession>
<accession>Q66K65</accession>
<accession>Q96KK7</accession>
<accession>Q9HAN8</accession>
<accession>Q9UEE0</accession>
<accession>Q9UEE4</accession>
<accession>Q9UIZ6</accession>
<accession>Q9Y6K2</accession>
<sequence>MKSLSLLLAVALGLATAVSAGPAVIECWFVEDASGKGLAKRPGALLLRQGPGEPPPRPDLDPELYLSVHDPAGALQAAFRRYPRGAPAPHCEMSRFVPLPASAKWASGLTPAQNCPRALDGAWLMVSISSPVLSLSSLLRPQPEPQQEPVLITMATVVLTVLTHTPAPRVRLGQDALLDLSFAYMPPTSEAASSLAPGPPPFGLEWRRQHLGKGHLLLAATPGLNGQMPAAQEGAVAFAAWDDDEPWGPWTGNGTFWLPTVQPFQEGTYLATIHLPYLQGQVTLELAVYKPPKVSLMPATLARAAPGEAPPELLCLVSHFYPSGGLEVEWELRGGPGGRSQKAEGQRWLSALRHHSDGSVSLSGHLQPPPVTTEQHGARYACRIHHPSLPASGRSAEVTLEVAGLSGPSLEDSVGLFLSAFLLLGLFKALGWAAVYLSTCKDSKKKAE</sequence>
<dbReference type="EMBL" id="Y13582">
    <property type="protein sequence ID" value="CAA73909.1"/>
    <property type="molecule type" value="mRNA"/>
</dbReference>
<dbReference type="EMBL" id="AF009510">
    <property type="protein sequence ID" value="AAC20076.1"/>
    <property type="molecule type" value="mRNA"/>
</dbReference>
<dbReference type="EMBL" id="AB010639">
    <property type="protein sequence ID" value="BAA28757.1"/>
    <property type="molecule type" value="mRNA"/>
</dbReference>
<dbReference type="EMBL" id="AB012622">
    <property type="protein sequence ID" value="BAA28758.1"/>
    <property type="molecule type" value="Genomic_DNA"/>
</dbReference>
<dbReference type="EMBL" id="AB012920">
    <property type="protein sequence ID" value="BAA28759.1"/>
    <property type="molecule type" value="Genomic_DNA"/>
</dbReference>
<dbReference type="EMBL" id="AF029750">
    <property type="protein sequence ID" value="AAB82949.1"/>
    <property type="molecule type" value="mRNA"/>
</dbReference>
<dbReference type="EMBL" id="AF067286">
    <property type="protein sequence ID" value="AAD32924.2"/>
    <property type="status" value="ALT_SEQ"/>
    <property type="molecule type" value="mRNA"/>
</dbReference>
<dbReference type="EMBL" id="AF314222">
    <property type="protein sequence ID" value="AAG33061.1"/>
    <property type="molecule type" value="mRNA"/>
</dbReference>
<dbReference type="EMBL" id="EU693375">
    <property type="protein sequence ID" value="ACD68200.1"/>
    <property type="molecule type" value="mRNA"/>
</dbReference>
<dbReference type="EMBL" id="AL662820">
    <property type="status" value="NOT_ANNOTATED_CDS"/>
    <property type="molecule type" value="Genomic_DNA"/>
</dbReference>
<dbReference type="EMBL" id="AL662827">
    <property type="status" value="NOT_ANNOTATED_CDS"/>
    <property type="molecule type" value="Genomic_DNA"/>
</dbReference>
<dbReference type="EMBL" id="BX248088">
    <property type="status" value="NOT_ANNOTATED_CDS"/>
    <property type="molecule type" value="Genomic_DNA"/>
</dbReference>
<dbReference type="EMBL" id="CR759786">
    <property type="status" value="NOT_ANNOTATED_CDS"/>
    <property type="molecule type" value="Genomic_DNA"/>
</dbReference>
<dbReference type="EMBL" id="CR759817">
    <property type="status" value="NOT_ANNOTATED_CDS"/>
    <property type="molecule type" value="Genomic_DNA"/>
</dbReference>
<dbReference type="EMBL" id="Z97183">
    <property type="status" value="NOT_ANNOTATED_CDS"/>
    <property type="molecule type" value="Genomic_DNA"/>
</dbReference>
<dbReference type="EMBL" id="Z97184">
    <property type="status" value="NOT_ANNOTATED_CDS"/>
    <property type="molecule type" value="Genomic_DNA"/>
</dbReference>
<dbReference type="EMBL" id="CH471081">
    <property type="protein sequence ID" value="EAX03717.1"/>
    <property type="molecule type" value="Genomic_DNA"/>
</dbReference>
<dbReference type="EMBL" id="BC080574">
    <property type="protein sequence ID" value="AAH80574.1"/>
    <property type="molecule type" value="mRNA"/>
</dbReference>
<dbReference type="CCDS" id="CCDS34426.1">
    <molecule id="O15533-1"/>
</dbReference>
<dbReference type="CCDS" id="CCDS34427.2">
    <molecule id="O15533-4"/>
</dbReference>
<dbReference type="CCDS" id="CCDS34428.2">
    <molecule id="O15533-3"/>
</dbReference>
<dbReference type="RefSeq" id="NP_003181.3">
    <molecule id="O15533-1"/>
    <property type="nucleotide sequence ID" value="NM_003190.4"/>
</dbReference>
<dbReference type="RefSeq" id="NP_757345.2">
    <molecule id="O15533-3"/>
    <property type="nucleotide sequence ID" value="NM_172208.3"/>
</dbReference>
<dbReference type="RefSeq" id="NP_757346.2">
    <molecule id="O15533-4"/>
    <property type="nucleotide sequence ID" value="NM_172209.3"/>
</dbReference>
<dbReference type="PDB" id="3F8U">
    <property type="method" value="X-ray"/>
    <property type="resolution" value="2.60 A"/>
    <property type="chains" value="B/D=1-401"/>
</dbReference>
<dbReference type="PDB" id="6ENY">
    <property type="method" value="EM"/>
    <property type="resolution" value="5.80 A"/>
    <property type="chains" value="C=21-448"/>
</dbReference>
<dbReference type="PDB" id="7QNG">
    <property type="method" value="X-ray"/>
    <property type="resolution" value="2.70 A"/>
    <property type="chains" value="A=1-401"/>
</dbReference>
<dbReference type="PDB" id="7QPD">
    <property type="method" value="EM"/>
    <property type="resolution" value="3.73 A"/>
    <property type="chains" value="T=21-448"/>
</dbReference>
<dbReference type="PDB" id="7TUE">
    <property type="method" value="X-ray"/>
    <property type="resolution" value="3.10 A"/>
    <property type="chains" value="D=21-401"/>
</dbReference>
<dbReference type="PDB" id="7TUF">
    <property type="method" value="X-ray"/>
    <property type="resolution" value="2.80 A"/>
    <property type="chains" value="C/D=21-401"/>
</dbReference>
<dbReference type="PDB" id="7TUG">
    <property type="method" value="X-ray"/>
    <property type="resolution" value="3.90 A"/>
    <property type="chains" value="D=21-401"/>
</dbReference>
<dbReference type="PDBsum" id="3F8U"/>
<dbReference type="PDBsum" id="6ENY"/>
<dbReference type="PDBsum" id="7QNG"/>
<dbReference type="PDBsum" id="7QPD"/>
<dbReference type="PDBsum" id="7TUE"/>
<dbReference type="PDBsum" id="7TUF"/>
<dbReference type="PDBsum" id="7TUG"/>
<dbReference type="EMDB" id="EMD-14119"/>
<dbReference type="EMDB" id="EMD-3906"/>
<dbReference type="SMR" id="O15533"/>
<dbReference type="BioGRID" id="112755">
    <property type="interactions" value="109"/>
</dbReference>
<dbReference type="ComplexPortal" id="CPX-2375">
    <property type="entry name" value="Tapasin-ERp57 complex"/>
</dbReference>
<dbReference type="FunCoup" id="O15533">
    <property type="interactions" value="494"/>
</dbReference>
<dbReference type="IntAct" id="O15533">
    <property type="interactions" value="50"/>
</dbReference>
<dbReference type="MINT" id="O15533"/>
<dbReference type="STRING" id="9606.ENSP00000404833"/>
<dbReference type="TCDB" id="8.A.196.1.1">
    <property type="family name" value="the tapasin (tapasin) family"/>
</dbReference>
<dbReference type="TCDB" id="9.A.75.1.2">
    <property type="family name" value="the mhc ii receptor (mhc2r) family"/>
</dbReference>
<dbReference type="GlyConnect" id="1784">
    <property type="glycosylation" value="2 N-Linked glycans (1 site)"/>
</dbReference>
<dbReference type="GlyCosmos" id="O15533">
    <property type="glycosylation" value="1 site, 1 glycan"/>
</dbReference>
<dbReference type="GlyGen" id="O15533">
    <property type="glycosylation" value="3 sites, 2 N-linked glycans (1 site), 2 O-linked glycans (2 sites)"/>
</dbReference>
<dbReference type="iPTMnet" id="O15533"/>
<dbReference type="PhosphoSitePlus" id="O15533"/>
<dbReference type="SwissPalm" id="O15533"/>
<dbReference type="BioMuta" id="TAPBP"/>
<dbReference type="jPOST" id="O15533"/>
<dbReference type="MassIVE" id="O15533"/>
<dbReference type="PaxDb" id="9606-ENSP00000404833"/>
<dbReference type="PeptideAtlas" id="O15533"/>
<dbReference type="ProteomicsDB" id="20346"/>
<dbReference type="ProteomicsDB" id="48740">
    <molecule id="O15533-1"/>
</dbReference>
<dbReference type="ProteomicsDB" id="48741">
    <molecule id="O15533-2"/>
</dbReference>
<dbReference type="ProteomicsDB" id="48742">
    <molecule id="O15533-3"/>
</dbReference>
<dbReference type="Pumba" id="O15533"/>
<dbReference type="TopDownProteomics" id="O15533-3">
    <molecule id="O15533-3"/>
</dbReference>
<dbReference type="Antibodypedia" id="45647">
    <property type="antibodies" value="206 antibodies from 30 providers"/>
</dbReference>
<dbReference type="CPTC" id="O15533">
    <property type="antibodies" value="2 antibodies"/>
</dbReference>
<dbReference type="DNASU" id="6892"/>
<dbReference type="Ensembl" id="ENST00000374572.7">
    <property type="protein sequence ID" value="ENSP00000363700.3"/>
    <property type="gene ID" value="ENSG00000112493.12"/>
</dbReference>
<dbReference type="Ensembl" id="ENST00000383065.8">
    <molecule id="O15533-3"/>
    <property type="protein sequence ID" value="ENSP00000372542.4"/>
    <property type="gene ID" value="ENSG00000206208.11"/>
</dbReference>
<dbReference type="Ensembl" id="ENST00000383066.8">
    <molecule id="O15533-1"/>
    <property type="protein sequence ID" value="ENSP00000372543.4"/>
    <property type="gene ID" value="ENSG00000206208.11"/>
</dbReference>
<dbReference type="Ensembl" id="ENST00000383197.8">
    <property type="protein sequence ID" value="ENSP00000372684.4"/>
    <property type="gene ID" value="ENSG00000206281.11"/>
</dbReference>
<dbReference type="Ensembl" id="ENST00000383198.6">
    <property type="protein sequence ID" value="ENSP00000372685.2"/>
    <property type="gene ID" value="ENSG00000206281.11"/>
</dbReference>
<dbReference type="Ensembl" id="ENST00000395114.7">
    <property type="protein sequence ID" value="ENSP00000378546.3"/>
    <property type="gene ID" value="ENSG00000112493.12"/>
</dbReference>
<dbReference type="Ensembl" id="ENST00000417059.5">
    <property type="protein sequence ID" value="ENSP00000402087.1"/>
    <property type="gene ID" value="ENSG00000236490.9"/>
</dbReference>
<dbReference type="Ensembl" id="ENST00000426633.6">
    <molecule id="O15533-3"/>
    <property type="protein sequence ID" value="ENSP00000404833.2"/>
    <property type="gene ID" value="ENSG00000231925.14"/>
</dbReference>
<dbReference type="Ensembl" id="ENST00000434618.7">
    <molecule id="O15533-1"/>
    <property type="protein sequence ID" value="ENSP00000395701.2"/>
    <property type="gene ID" value="ENSG00000231925.14"/>
</dbReference>
<dbReference type="Ensembl" id="ENST00000456807.6">
    <property type="protein sequence ID" value="ENSP00000407195.2"/>
    <property type="gene ID" value="ENSG00000236490.9"/>
</dbReference>
<dbReference type="Ensembl" id="ENST00000489157.6">
    <molecule id="O15533-4"/>
    <property type="protein sequence ID" value="ENSP00000419659.1"/>
    <property type="gene ID" value="ENSG00000231925.14"/>
</dbReference>
<dbReference type="Ensembl" id="ENST00000551943.3">
    <molecule id="O15533-4"/>
    <property type="protein sequence ID" value="ENSP00000447665.1"/>
    <property type="gene ID" value="ENSG00000206208.11"/>
</dbReference>
<dbReference type="Ensembl" id="ENST00000699659.1">
    <molecule id="O15533-3"/>
    <property type="protein sequence ID" value="ENSP00000514507.1"/>
    <property type="gene ID" value="ENSG00000231925.14"/>
</dbReference>
<dbReference type="GeneID" id="6892"/>
<dbReference type="KEGG" id="hsa:6892"/>
<dbReference type="MANE-Select" id="ENST00000434618.7">
    <property type="protein sequence ID" value="ENSP00000395701.2"/>
    <property type="RefSeq nucleotide sequence ID" value="NM_003190.5"/>
    <property type="RefSeq protein sequence ID" value="NP_003181.3"/>
</dbReference>
<dbReference type="UCSC" id="uc003odx.3">
    <molecule id="O15533-1"/>
    <property type="organism name" value="human"/>
</dbReference>
<dbReference type="AGR" id="HGNC:11566"/>
<dbReference type="CTD" id="6892"/>
<dbReference type="DisGeNET" id="6892"/>
<dbReference type="GeneCards" id="TAPBP"/>
<dbReference type="HGNC" id="HGNC:11566">
    <property type="gene designation" value="TAPBP"/>
</dbReference>
<dbReference type="HPA" id="ENSG00000231925">
    <property type="expression patterns" value="Low tissue specificity"/>
</dbReference>
<dbReference type="MalaCards" id="TAPBP"/>
<dbReference type="MIM" id="601962">
    <property type="type" value="gene"/>
</dbReference>
<dbReference type="MIM" id="620814">
    <property type="type" value="phenotype"/>
</dbReference>
<dbReference type="neXtProt" id="NX_O15533"/>
<dbReference type="OpenTargets" id="ENSG00000231925"/>
<dbReference type="Orphanet" id="34592">
    <property type="disease" value="Immunodeficiency by defective expression of MHC class I"/>
</dbReference>
<dbReference type="PharmGKB" id="PA36331"/>
<dbReference type="VEuPathDB" id="HostDB:ENSG00000231925"/>
<dbReference type="eggNOG" id="ENOG502QR0A">
    <property type="taxonomic scope" value="Eukaryota"/>
</dbReference>
<dbReference type="GeneTree" id="ENSGT00940000159200"/>
<dbReference type="InParanoid" id="O15533"/>
<dbReference type="OMA" id="YMPPTLE"/>
<dbReference type="OrthoDB" id="8929156at2759"/>
<dbReference type="PAN-GO" id="O15533">
    <property type="GO annotations" value="5 GO annotations based on evolutionary models"/>
</dbReference>
<dbReference type="PhylomeDB" id="O15533"/>
<dbReference type="TreeFam" id="TF334274"/>
<dbReference type="PathwayCommons" id="O15533"/>
<dbReference type="Reactome" id="R-HSA-1236974">
    <property type="pathway name" value="ER-Phagosome pathway"/>
</dbReference>
<dbReference type="Reactome" id="R-HSA-983170">
    <property type="pathway name" value="Antigen Presentation: Folding, assembly and peptide loading of class I MHC"/>
</dbReference>
<dbReference type="SignaLink" id="O15533"/>
<dbReference type="BioGRID-ORCS" id="6892">
    <property type="hits" value="17 hits in 1155 CRISPR screens"/>
</dbReference>
<dbReference type="ChiTaRS" id="TAPBP">
    <property type="organism name" value="human"/>
</dbReference>
<dbReference type="EvolutionaryTrace" id="O15533"/>
<dbReference type="GeneWiki" id="Tapasin"/>
<dbReference type="GenomeRNAi" id="6892"/>
<dbReference type="Pharos" id="O15533">
    <property type="development level" value="Tbio"/>
</dbReference>
<dbReference type="PRO" id="PR:O15533"/>
<dbReference type="Proteomes" id="UP000005640">
    <property type="component" value="Chromosome 6"/>
</dbReference>
<dbReference type="RNAct" id="O15533">
    <property type="molecule type" value="protein"/>
</dbReference>
<dbReference type="Bgee" id="ENSG00000231925">
    <property type="expression patterns" value="Expressed in bone marrow cell and 96 other cell types or tissues"/>
</dbReference>
<dbReference type="ExpressionAtlas" id="O15533">
    <property type="expression patterns" value="baseline and differential"/>
</dbReference>
<dbReference type="GO" id="GO:0005783">
    <property type="term" value="C:endoplasmic reticulum"/>
    <property type="evidence" value="ECO:0000305"/>
    <property type="project" value="UniProt"/>
</dbReference>
<dbReference type="GO" id="GO:0005789">
    <property type="term" value="C:endoplasmic reticulum membrane"/>
    <property type="evidence" value="ECO:0000314"/>
    <property type="project" value="UniProtKB"/>
</dbReference>
<dbReference type="GO" id="GO:0033116">
    <property type="term" value="C:endoplasmic reticulum-Golgi intermediate compartment membrane"/>
    <property type="evidence" value="ECO:0000304"/>
    <property type="project" value="Reactome"/>
</dbReference>
<dbReference type="GO" id="GO:0000139">
    <property type="term" value="C:Golgi membrane"/>
    <property type="evidence" value="ECO:0000314"/>
    <property type="project" value="UniProtKB"/>
</dbReference>
<dbReference type="GO" id="GO:0098553">
    <property type="term" value="C:lumenal side of endoplasmic reticulum membrane"/>
    <property type="evidence" value="ECO:0000304"/>
    <property type="project" value="Reactome"/>
</dbReference>
<dbReference type="GO" id="GO:0042824">
    <property type="term" value="C:MHC class I peptide loading complex"/>
    <property type="evidence" value="ECO:0000314"/>
    <property type="project" value="UniProtKB"/>
</dbReference>
<dbReference type="GO" id="GO:0030670">
    <property type="term" value="C:phagocytic vesicle membrane"/>
    <property type="evidence" value="ECO:0000304"/>
    <property type="project" value="Reactome"/>
</dbReference>
<dbReference type="GO" id="GO:0061779">
    <property type="term" value="C:Tapasin-ERp57 complex"/>
    <property type="evidence" value="ECO:0000353"/>
    <property type="project" value="ComplexPortal"/>
</dbReference>
<dbReference type="GO" id="GO:0042288">
    <property type="term" value="F:MHC class I protein binding"/>
    <property type="evidence" value="ECO:0000304"/>
    <property type="project" value="UniProtKB"/>
</dbReference>
<dbReference type="GO" id="GO:0023024">
    <property type="term" value="F:MHC class I protein complex binding"/>
    <property type="evidence" value="ECO:0000318"/>
    <property type="project" value="GO_Central"/>
</dbReference>
<dbReference type="GO" id="GO:0060090">
    <property type="term" value="F:molecular adaptor activity"/>
    <property type="evidence" value="ECO:0000314"/>
    <property type="project" value="UniProt"/>
</dbReference>
<dbReference type="GO" id="GO:0042605">
    <property type="term" value="F:peptide antigen binding"/>
    <property type="evidence" value="ECO:0000304"/>
    <property type="project" value="UniProtKB"/>
</dbReference>
<dbReference type="GO" id="GO:0044183">
    <property type="term" value="F:protein folding chaperone"/>
    <property type="evidence" value="ECO:0000314"/>
    <property type="project" value="UniProt"/>
</dbReference>
<dbReference type="GO" id="GO:0062061">
    <property type="term" value="F:TAP complex binding"/>
    <property type="evidence" value="ECO:0000314"/>
    <property type="project" value="UniProtKB"/>
</dbReference>
<dbReference type="GO" id="GO:0046978">
    <property type="term" value="F:TAP1 binding"/>
    <property type="evidence" value="ECO:0000314"/>
    <property type="project" value="UniProtKB"/>
</dbReference>
<dbReference type="GO" id="GO:0046979">
    <property type="term" value="F:TAP2 binding"/>
    <property type="evidence" value="ECO:0000314"/>
    <property type="project" value="UniProtKB"/>
</dbReference>
<dbReference type="GO" id="GO:0051082">
    <property type="term" value="F:unfolded protein binding"/>
    <property type="evidence" value="ECO:0000304"/>
    <property type="project" value="UniProtKB"/>
</dbReference>
<dbReference type="GO" id="GO:0019885">
    <property type="term" value="P:antigen processing and presentation of endogenous peptide antigen via MHC class I"/>
    <property type="evidence" value="ECO:0007669"/>
    <property type="project" value="InterPro"/>
</dbReference>
<dbReference type="GO" id="GO:0002398">
    <property type="term" value="P:MHC class Ib protein complex assembly"/>
    <property type="evidence" value="ECO:0000315"/>
    <property type="project" value="UniProtKB"/>
</dbReference>
<dbReference type="GO" id="GO:0002502">
    <property type="term" value="P:peptide antigen assembly with MHC class I protein complex"/>
    <property type="evidence" value="ECO:0000314"/>
    <property type="project" value="UniProt"/>
</dbReference>
<dbReference type="GO" id="GO:0050823">
    <property type="term" value="P:peptide antigen stabilization"/>
    <property type="evidence" value="ECO:0000250"/>
    <property type="project" value="UniProtKB"/>
</dbReference>
<dbReference type="GO" id="GO:0065003">
    <property type="term" value="P:protein-containing complex assembly"/>
    <property type="evidence" value="ECO:0000314"/>
    <property type="project" value="UniProtKB"/>
</dbReference>
<dbReference type="GO" id="GO:0010468">
    <property type="term" value="P:regulation of gene expression"/>
    <property type="evidence" value="ECO:0000315"/>
    <property type="project" value="AgBase"/>
</dbReference>
<dbReference type="GO" id="GO:0061635">
    <property type="term" value="P:regulation of protein complex stability"/>
    <property type="evidence" value="ECO:0000314"/>
    <property type="project" value="AgBase"/>
</dbReference>
<dbReference type="GO" id="GO:0006890">
    <property type="term" value="P:retrograde vesicle-mediated transport, Golgi to endoplasmic reticulum"/>
    <property type="evidence" value="ECO:0000303"/>
    <property type="project" value="UniProtKB"/>
</dbReference>
<dbReference type="FunFam" id="2.60.40.10:FF:000924">
    <property type="entry name" value="TAP binding protein"/>
    <property type="match status" value="1"/>
</dbReference>
<dbReference type="FunFam" id="2.60.40.10:FF:001043">
    <property type="entry name" value="TAP binding protein"/>
    <property type="match status" value="1"/>
</dbReference>
<dbReference type="FunFam" id="2.60.40.10:FF:001044">
    <property type="entry name" value="TAP binding protein"/>
    <property type="match status" value="1"/>
</dbReference>
<dbReference type="Gene3D" id="2.60.40.10">
    <property type="entry name" value="Immunoglobulins"/>
    <property type="match status" value="3"/>
</dbReference>
<dbReference type="InterPro" id="IPR007110">
    <property type="entry name" value="Ig-like_dom"/>
</dbReference>
<dbReference type="InterPro" id="IPR036179">
    <property type="entry name" value="Ig-like_dom_sf"/>
</dbReference>
<dbReference type="InterPro" id="IPR013783">
    <property type="entry name" value="Ig-like_fold"/>
</dbReference>
<dbReference type="InterPro" id="IPR003597">
    <property type="entry name" value="Ig_C1-set"/>
</dbReference>
<dbReference type="InterPro" id="IPR050380">
    <property type="entry name" value="Immune_Resp_Modulators"/>
</dbReference>
<dbReference type="InterPro" id="IPR008056">
    <property type="entry name" value="Tapasin"/>
</dbReference>
<dbReference type="PANTHER" id="PTHR23411">
    <property type="entry name" value="TAPASIN"/>
    <property type="match status" value="1"/>
</dbReference>
<dbReference type="Pfam" id="PF07654">
    <property type="entry name" value="C1-set"/>
    <property type="match status" value="1"/>
</dbReference>
<dbReference type="PRINTS" id="PR01669">
    <property type="entry name" value="TAPASIN"/>
</dbReference>
<dbReference type="SUPFAM" id="SSF48726">
    <property type="entry name" value="Immunoglobulin"/>
    <property type="match status" value="1"/>
</dbReference>
<dbReference type="PROSITE" id="PS50835">
    <property type="entry name" value="IG_LIKE"/>
    <property type="match status" value="1"/>
</dbReference>
<name>TPSN_HUMAN</name>
<evidence type="ECO:0000255" key="1"/>
<evidence type="ECO:0000255" key="2">
    <source>
        <dbReference type="PROSITE-ProRule" id="PRU00114"/>
    </source>
</evidence>
<evidence type="ECO:0000269" key="3">
    <source>
    </source>
</evidence>
<evidence type="ECO:0000269" key="4">
    <source>
    </source>
</evidence>
<evidence type="ECO:0000269" key="5">
    <source>
    </source>
</evidence>
<evidence type="ECO:0000269" key="6">
    <source>
    </source>
</evidence>
<evidence type="ECO:0000269" key="7">
    <source>
    </source>
</evidence>
<evidence type="ECO:0000269" key="8">
    <source>
    </source>
</evidence>
<evidence type="ECO:0000269" key="9">
    <source>
    </source>
</evidence>
<evidence type="ECO:0000269" key="10">
    <source>
    </source>
</evidence>
<evidence type="ECO:0000269" key="11">
    <source>
    </source>
</evidence>
<evidence type="ECO:0000269" key="12">
    <source>
    </source>
</evidence>
<evidence type="ECO:0000269" key="13">
    <source>
    </source>
</evidence>
<evidence type="ECO:0000269" key="14">
    <source>
    </source>
</evidence>
<evidence type="ECO:0000269" key="15">
    <source>
    </source>
</evidence>
<evidence type="ECO:0000269" key="16">
    <source>
    </source>
</evidence>
<evidence type="ECO:0000269" key="17">
    <source>
    </source>
</evidence>
<evidence type="ECO:0000269" key="18">
    <source>
    </source>
</evidence>
<evidence type="ECO:0000269" key="19">
    <source>
    </source>
</evidence>
<evidence type="ECO:0000269" key="20">
    <source>
    </source>
</evidence>
<evidence type="ECO:0000269" key="21">
    <source ref="10"/>
</evidence>
<evidence type="ECO:0000303" key="22">
    <source>
    </source>
</evidence>
<evidence type="ECO:0000303" key="23">
    <source>
    </source>
</evidence>
<evidence type="ECO:0000303" key="24">
    <source>
    </source>
</evidence>
<evidence type="ECO:0000303" key="25">
    <source>
    </source>
</evidence>
<evidence type="ECO:0000305" key="26"/>
<evidence type="ECO:0000312" key="27">
    <source>
        <dbReference type="HGNC" id="HGNC:11566"/>
    </source>
</evidence>
<evidence type="ECO:0007744" key="28">
    <source>
    </source>
</evidence>
<evidence type="ECO:0007829" key="29">
    <source>
        <dbReference type="PDB" id="3F8U"/>
    </source>
</evidence>
<evidence type="ECO:0007829" key="30">
    <source>
        <dbReference type="PDB" id="7QNG"/>
    </source>
</evidence>
<evidence type="ECO:0007829" key="31">
    <source>
        <dbReference type="PDB" id="7TUF"/>
    </source>
</evidence>